<accession>Q4R180</accession>
<comment type="function">
    <text evidence="1">Component of the origin recognition complex (ORC) that binds origins of replication. DNA-binding is ATP-dependent. The specific DNA sequences that define origins of replication have not been identified yet. ORC is required to assemble the pre-replication complex necessary to initiate DNA replication. Binds histone H3 and H4 trimethylation marks H3K9me3, H3K27me3 and H4K20me3.</text>
</comment>
<comment type="subunit">
    <text evidence="1">Component of ORC, a complex composed of at least 6 subunits: ORC1, ORC2, ORC3, ORC4, ORC5 and ORC6. ORC is regulated in a cell-cycle dependent manner. It is sequentially assembled at the exit from anaphase of mitosis and disassembled as cells enter S phase.</text>
</comment>
<comment type="subcellular location">
    <subcellularLocation>
        <location evidence="1">Nucleus</location>
    </subcellularLocation>
    <subcellularLocation>
        <location evidence="1">Chromosome</location>
    </subcellularLocation>
</comment>
<comment type="PTM">
    <text evidence="1">Multi-mono-ubiquitinated by OBI1; ubiquitination is important for efficient DNA replication origin site activation. Ubiquitination levels are low in mitotic and early G1-phAse cells and are induced in late G1-/early S-phase, peaking in S-phase and decrease toward the end of the cell cycle.</text>
</comment>
<comment type="similarity">
    <text evidence="2">Belongs to the ORC3 family.</text>
</comment>
<keyword id="KW-0158">Chromosome</keyword>
<keyword id="KW-0235">DNA replication</keyword>
<keyword id="KW-0238">DNA-binding</keyword>
<keyword id="KW-0539">Nucleus</keyword>
<keyword id="KW-0597">Phosphoprotein</keyword>
<keyword id="KW-1185">Reference proteome</keyword>
<keyword id="KW-0832">Ubl conjugation</keyword>
<protein>
    <recommendedName>
        <fullName>Origin recognition complex subunit 3</fullName>
    </recommendedName>
</protein>
<reference key="1">
    <citation type="submission" date="2005-06" db="EMBL/GenBank/DDBJ databases">
        <title>Rat origin recognition complex, subunit 3.</title>
        <authorList>
            <person name="Saitoh Y."/>
        </authorList>
    </citation>
    <scope>NUCLEOTIDE SEQUENCE [MRNA]</scope>
</reference>
<organism>
    <name type="scientific">Rattus norvegicus</name>
    <name type="common">Rat</name>
    <dbReference type="NCBI Taxonomy" id="10116"/>
    <lineage>
        <taxon>Eukaryota</taxon>
        <taxon>Metazoa</taxon>
        <taxon>Chordata</taxon>
        <taxon>Craniata</taxon>
        <taxon>Vertebrata</taxon>
        <taxon>Euteleostomi</taxon>
        <taxon>Mammalia</taxon>
        <taxon>Eutheria</taxon>
        <taxon>Euarchontoglires</taxon>
        <taxon>Glires</taxon>
        <taxon>Rodentia</taxon>
        <taxon>Myomorpha</taxon>
        <taxon>Muroidea</taxon>
        <taxon>Muridae</taxon>
        <taxon>Murinae</taxon>
        <taxon>Rattus</taxon>
    </lineage>
</organism>
<feature type="chain" id="PRO_0000329971" description="Origin recognition complex subunit 3">
    <location>
        <begin position="1"/>
        <end position="711"/>
    </location>
</feature>
<feature type="modified residue" description="Phosphoserine" evidence="1">
    <location>
        <position position="23"/>
    </location>
</feature>
<feature type="modified residue" description="Phosphoserine" evidence="1">
    <location>
        <position position="515"/>
    </location>
</feature>
<evidence type="ECO:0000250" key="1">
    <source>
        <dbReference type="UniProtKB" id="Q9UBD5"/>
    </source>
</evidence>
<evidence type="ECO:0000305" key="2"/>
<dbReference type="EMBL" id="AB219142">
    <property type="protein sequence ID" value="BAE02662.1"/>
    <property type="molecule type" value="mRNA"/>
</dbReference>
<dbReference type="RefSeq" id="NP_001020453.1">
    <property type="nucleotide sequence ID" value="NM_001025282.1"/>
</dbReference>
<dbReference type="SMR" id="Q4R180"/>
<dbReference type="FunCoup" id="Q4R180">
    <property type="interactions" value="3138"/>
</dbReference>
<dbReference type="STRING" id="10116.ENSRNOP00000011085"/>
<dbReference type="PhosphoSitePlus" id="Q4R180"/>
<dbReference type="PaxDb" id="10116-ENSRNOP00000011085"/>
<dbReference type="GeneID" id="313138"/>
<dbReference type="KEGG" id="rno:313138"/>
<dbReference type="UCSC" id="RGD:1308457">
    <property type="organism name" value="rat"/>
</dbReference>
<dbReference type="AGR" id="RGD:1308457"/>
<dbReference type="CTD" id="23595"/>
<dbReference type="RGD" id="1308457">
    <property type="gene designation" value="Orc3"/>
</dbReference>
<dbReference type="eggNOG" id="KOG2538">
    <property type="taxonomic scope" value="Eukaryota"/>
</dbReference>
<dbReference type="InParanoid" id="Q4R180"/>
<dbReference type="PhylomeDB" id="Q4R180"/>
<dbReference type="Reactome" id="R-RNO-176187">
    <property type="pathway name" value="Activation of ATR in response to replication stress"/>
</dbReference>
<dbReference type="Reactome" id="R-RNO-68616">
    <property type="pathway name" value="Assembly of the ORC complex at the origin of replication"/>
</dbReference>
<dbReference type="Reactome" id="R-RNO-68689">
    <property type="pathway name" value="CDC6 association with the ORC:origin complex"/>
</dbReference>
<dbReference type="Reactome" id="R-RNO-68949">
    <property type="pathway name" value="Orc1 removal from chromatin"/>
</dbReference>
<dbReference type="Reactome" id="R-RNO-68962">
    <property type="pathway name" value="Activation of the pre-replicative complex"/>
</dbReference>
<dbReference type="PRO" id="PR:Q4R180"/>
<dbReference type="Proteomes" id="UP000002494">
    <property type="component" value="Unplaced"/>
</dbReference>
<dbReference type="GO" id="GO:0000785">
    <property type="term" value="C:chromatin"/>
    <property type="evidence" value="ECO:0000250"/>
    <property type="project" value="UniProtKB"/>
</dbReference>
<dbReference type="GO" id="GO:0031261">
    <property type="term" value="C:DNA replication preinitiation complex"/>
    <property type="evidence" value="ECO:0000318"/>
    <property type="project" value="GO_Central"/>
</dbReference>
<dbReference type="GO" id="GO:0005664">
    <property type="term" value="C:nuclear origin of replication recognition complex"/>
    <property type="evidence" value="ECO:0000250"/>
    <property type="project" value="UniProtKB"/>
</dbReference>
<dbReference type="GO" id="GO:0005656">
    <property type="term" value="C:nuclear pre-replicative complex"/>
    <property type="evidence" value="ECO:0000318"/>
    <property type="project" value="GO_Central"/>
</dbReference>
<dbReference type="GO" id="GO:0000808">
    <property type="term" value="C:origin recognition complex"/>
    <property type="evidence" value="ECO:0000266"/>
    <property type="project" value="RGD"/>
</dbReference>
<dbReference type="GO" id="GO:0003688">
    <property type="term" value="F:DNA replication origin binding"/>
    <property type="evidence" value="ECO:0000318"/>
    <property type="project" value="GO_Central"/>
</dbReference>
<dbReference type="GO" id="GO:0006270">
    <property type="term" value="P:DNA replication initiation"/>
    <property type="evidence" value="ECO:0000266"/>
    <property type="project" value="RGD"/>
</dbReference>
<dbReference type="GO" id="GO:0014009">
    <property type="term" value="P:glial cell proliferation"/>
    <property type="evidence" value="ECO:0000266"/>
    <property type="project" value="RGD"/>
</dbReference>
<dbReference type="GO" id="GO:0061351">
    <property type="term" value="P:neural precursor cell proliferation"/>
    <property type="evidence" value="ECO:0000266"/>
    <property type="project" value="RGD"/>
</dbReference>
<dbReference type="GO" id="GO:0006275">
    <property type="term" value="P:regulation of DNA replication"/>
    <property type="evidence" value="ECO:0000250"/>
    <property type="project" value="UniProtKB"/>
</dbReference>
<dbReference type="CDD" id="cd20704">
    <property type="entry name" value="Orc3"/>
    <property type="match status" value="1"/>
</dbReference>
<dbReference type="InterPro" id="IPR020795">
    <property type="entry name" value="ORC3"/>
</dbReference>
<dbReference type="InterPro" id="IPR045663">
    <property type="entry name" value="ORC3_ins"/>
</dbReference>
<dbReference type="InterPro" id="IPR045667">
    <property type="entry name" value="ORC3_N"/>
</dbReference>
<dbReference type="InterPro" id="IPR040855">
    <property type="entry name" value="ORC_WH_C"/>
</dbReference>
<dbReference type="PANTHER" id="PTHR12748">
    <property type="entry name" value="ORIGIN RECOGNITION COMPLEX SUBUNIT 3"/>
    <property type="match status" value="1"/>
</dbReference>
<dbReference type="PANTHER" id="PTHR12748:SF0">
    <property type="entry name" value="ORIGIN RECOGNITION COMPLEX SUBUNIT 3"/>
    <property type="match status" value="1"/>
</dbReference>
<dbReference type="Pfam" id="PF19675">
    <property type="entry name" value="ORC3_ins"/>
    <property type="match status" value="1"/>
</dbReference>
<dbReference type="Pfam" id="PF07034">
    <property type="entry name" value="ORC3_N"/>
    <property type="match status" value="1"/>
</dbReference>
<dbReference type="Pfam" id="PF18137">
    <property type="entry name" value="ORC_WH_C"/>
    <property type="match status" value="1"/>
</dbReference>
<sequence length="711" mass="81901">MATSSVSKGCFVFKPDFKKRKISVPIEDYFNNEELDSEDSKLRFETYRLLWQRIKSETEQLQEGLNENLFDNLVDFLQKSHSEFQKNSGNWGSQMRLREIPTAALILGVNVTDHDVIFRSLTETLHNNVTPYVVSLQAKDCPDVKHFLQKLTSELIDCCVDRNSKEEKNDKALRRTSYSMDSLSSWYSTVAQKTGPKMTSKKRATCSQWQSPPVVLILKNMESFSTKVLQDFIIISSQHLHEFPLILIFGIATSPVIIHRLLPHSVSSLLCIELFQSLSCKEHLTVVLDKLLLTPQFPFKLSKKALQVLTNIFLYHDFSIQNFIKGLKLSLLEHFYSQPLSVLCCDLSEAKKRINVFSVNQCEKIRRLPSFRRYVENQPLEKQVALLTNETFLKEETQSLLEDLHVYHINYFLVLRCLHNFTSSLPKYPLGRQIRELYCTCLEKKIWDSEEYESALQLLRMLAKDELMGILEQCVKVLNSSTEKQLSNTAQKIKGFLTQFQNLDDSKEEEDACGSQPKGLQKTDLYHLQKSLLEMKELRRTTKKPTKFEMLRENVINFIDNLVRDYLLPPEGQPLHEVVYFSAANTLREHLNAAPRIALHTALNNPYYYLKNEALKSEEGCIPSVAPDICIAYKLHLECSRLINLVDWSEAFATVVTAAEKMDTNSTVSEEMSEIIHARFIRAVSELELLGFIKPTKQKTDHVARLTWGGC</sequence>
<proteinExistence type="evidence at transcript level"/>
<gene>
    <name type="primary">Orc3</name>
    <name type="synonym">Orc3l</name>
</gene>
<name>ORC3_RAT</name>